<keyword id="KW-0249">Electron transport</keyword>
<keyword id="KW-0472">Membrane</keyword>
<keyword id="KW-0496">Mitochondrion</keyword>
<keyword id="KW-0999">Mitochondrion inner membrane</keyword>
<keyword id="KW-0520">NAD</keyword>
<keyword id="KW-1185">Reference proteome</keyword>
<keyword id="KW-0679">Respiratory chain</keyword>
<keyword id="KW-1278">Translocase</keyword>
<keyword id="KW-0812">Transmembrane</keyword>
<keyword id="KW-1133">Transmembrane helix</keyword>
<keyword id="KW-0813">Transport</keyword>
<keyword id="KW-0830">Ubiquinone</keyword>
<name>NU2M_HORSE</name>
<reference key="1">
    <citation type="journal article" date="1994" name="Gene">
        <title>The complete mitochondrial DNA sequence of the horse, Equus caballus: extensive heteroplasmy of the control region.</title>
        <authorList>
            <person name="Xu X."/>
            <person name="Arnason U."/>
        </authorList>
    </citation>
    <scope>NUCLEOTIDE SEQUENCE [LARGE SCALE GENOMIC DNA]</scope>
    <source>
        <strain evidence="5">Thoroughbred</strain>
    </source>
</reference>
<gene>
    <name evidence="1" type="primary">MT-ND2</name>
    <name type="synonym">MTND2</name>
    <name type="synonym">NADH2</name>
    <name type="synonym">ND2</name>
</gene>
<geneLocation type="mitochondrion"/>
<evidence type="ECO:0000250" key="1">
    <source>
        <dbReference type="UniProtKB" id="P03891"/>
    </source>
</evidence>
<evidence type="ECO:0000250" key="2">
    <source>
        <dbReference type="UniProtKB" id="P03892"/>
    </source>
</evidence>
<evidence type="ECO:0000255" key="3"/>
<evidence type="ECO:0000305" key="4"/>
<evidence type="ECO:0000312" key="5">
    <source>
        <dbReference type="Proteomes" id="UP000002281"/>
    </source>
</evidence>
<dbReference type="EC" id="7.1.1.2" evidence="1"/>
<dbReference type="EMBL" id="X79547">
    <property type="protein sequence ID" value="CAA56080.1"/>
    <property type="molecule type" value="Genomic_DNA"/>
</dbReference>
<dbReference type="PIR" id="T11858">
    <property type="entry name" value="T11858"/>
</dbReference>
<dbReference type="RefSeq" id="NP_007161.1">
    <property type="nucleotide sequence ID" value="NC_001640.1"/>
</dbReference>
<dbReference type="SMR" id="P48653"/>
<dbReference type="FunCoup" id="P48653">
    <property type="interactions" value="106"/>
</dbReference>
<dbReference type="STRING" id="9796.ENSECAP00000023101"/>
<dbReference type="PaxDb" id="9796-ENSECAP00000023101"/>
<dbReference type="Ensembl" id="ENSECAT00000029834.1">
    <property type="protein sequence ID" value="ENSECAP00000023101.1"/>
    <property type="gene ID" value="ENSECAG00000027681.1"/>
</dbReference>
<dbReference type="KEGG" id="ecb:807844"/>
<dbReference type="VGNC" id="VGNC:59017">
    <property type="gene designation" value="MT-ND2"/>
</dbReference>
<dbReference type="GeneTree" id="ENSGT00730000111348"/>
<dbReference type="HOGENOM" id="CLU_007100_1_3_1"/>
<dbReference type="InParanoid" id="P48653"/>
<dbReference type="OMA" id="HFWVPEV"/>
<dbReference type="OrthoDB" id="4092844at2759"/>
<dbReference type="Proteomes" id="UP000002281">
    <property type="component" value="Mitochondrion"/>
</dbReference>
<dbReference type="Bgee" id="ENSECAG00000027681">
    <property type="expression patterns" value="Expressed in gluteus medius and 23 other cell types or tissues"/>
</dbReference>
<dbReference type="GO" id="GO:0005743">
    <property type="term" value="C:mitochondrial inner membrane"/>
    <property type="evidence" value="ECO:0000250"/>
    <property type="project" value="UniProtKB"/>
</dbReference>
<dbReference type="GO" id="GO:0045271">
    <property type="term" value="C:respiratory chain complex I"/>
    <property type="evidence" value="ECO:0000318"/>
    <property type="project" value="GO_Central"/>
</dbReference>
<dbReference type="GO" id="GO:0008137">
    <property type="term" value="F:NADH dehydrogenase (ubiquinone) activity"/>
    <property type="evidence" value="ECO:0000250"/>
    <property type="project" value="UniProtKB"/>
</dbReference>
<dbReference type="GO" id="GO:0006120">
    <property type="term" value="P:mitochondrial electron transport, NADH to ubiquinone"/>
    <property type="evidence" value="ECO:0000250"/>
    <property type="project" value="UniProtKB"/>
</dbReference>
<dbReference type="GO" id="GO:0032981">
    <property type="term" value="P:mitochondrial respiratory chain complex I assembly"/>
    <property type="evidence" value="ECO:0000250"/>
    <property type="project" value="UniProtKB"/>
</dbReference>
<dbReference type="GO" id="GO:0072593">
    <property type="term" value="P:reactive oxygen species metabolic process"/>
    <property type="evidence" value="ECO:0007669"/>
    <property type="project" value="Ensembl"/>
</dbReference>
<dbReference type="InterPro" id="IPR050175">
    <property type="entry name" value="Complex_I_Subunit_2"/>
</dbReference>
<dbReference type="InterPro" id="IPR010933">
    <property type="entry name" value="NADH_DH_su2_C"/>
</dbReference>
<dbReference type="InterPro" id="IPR003917">
    <property type="entry name" value="NADH_UbQ_OxRdtase_chain2"/>
</dbReference>
<dbReference type="InterPro" id="IPR001750">
    <property type="entry name" value="ND/Mrp_TM"/>
</dbReference>
<dbReference type="PANTHER" id="PTHR46552">
    <property type="entry name" value="NADH-UBIQUINONE OXIDOREDUCTASE CHAIN 2"/>
    <property type="match status" value="1"/>
</dbReference>
<dbReference type="PANTHER" id="PTHR46552:SF1">
    <property type="entry name" value="NADH-UBIQUINONE OXIDOREDUCTASE CHAIN 2"/>
    <property type="match status" value="1"/>
</dbReference>
<dbReference type="Pfam" id="PF06444">
    <property type="entry name" value="NADH_dehy_S2_C"/>
    <property type="match status" value="1"/>
</dbReference>
<dbReference type="Pfam" id="PF00361">
    <property type="entry name" value="Proton_antipo_M"/>
    <property type="match status" value="1"/>
</dbReference>
<dbReference type="PRINTS" id="PR01436">
    <property type="entry name" value="NADHDHGNASE2"/>
</dbReference>
<protein>
    <recommendedName>
        <fullName evidence="1">NADH-ubiquinone oxidoreductase chain 2</fullName>
        <ecNumber evidence="1">7.1.1.2</ecNumber>
    </recommendedName>
    <alternativeName>
        <fullName>NADH dehydrogenase subunit 2</fullName>
    </alternativeName>
</protein>
<proteinExistence type="inferred from homology"/>
<comment type="function">
    <text evidence="1">Core subunit of the mitochondrial membrane respiratory chain NADH dehydrogenase (Complex I) which catalyzes electron transfer from NADH through the respiratory chain, using ubiquinone as an electron acceptor. Essential for the catalytic activity and assembly of complex I.</text>
</comment>
<comment type="catalytic activity">
    <reaction evidence="1">
        <text>a ubiquinone + NADH + 5 H(+)(in) = a ubiquinol + NAD(+) + 4 H(+)(out)</text>
        <dbReference type="Rhea" id="RHEA:29091"/>
        <dbReference type="Rhea" id="RHEA-COMP:9565"/>
        <dbReference type="Rhea" id="RHEA-COMP:9566"/>
        <dbReference type="ChEBI" id="CHEBI:15378"/>
        <dbReference type="ChEBI" id="CHEBI:16389"/>
        <dbReference type="ChEBI" id="CHEBI:17976"/>
        <dbReference type="ChEBI" id="CHEBI:57540"/>
        <dbReference type="ChEBI" id="CHEBI:57945"/>
        <dbReference type="EC" id="7.1.1.2"/>
    </reaction>
</comment>
<comment type="subunit">
    <text evidence="1 2">Core subunit of respiratory chain NADH dehydrogenase (Complex I) which is composed of 45 different subunits. Interacts with TMEM242 (By similarity).</text>
</comment>
<comment type="subcellular location">
    <subcellularLocation>
        <location evidence="2">Mitochondrion inner membrane</location>
        <topology evidence="3">Multi-pass membrane protein</topology>
    </subcellularLocation>
</comment>
<comment type="similarity">
    <text evidence="4">Belongs to the complex I subunit 2 family.</text>
</comment>
<organism>
    <name type="scientific">Equus caballus</name>
    <name type="common">Horse</name>
    <dbReference type="NCBI Taxonomy" id="9796"/>
    <lineage>
        <taxon>Eukaryota</taxon>
        <taxon>Metazoa</taxon>
        <taxon>Chordata</taxon>
        <taxon>Craniata</taxon>
        <taxon>Vertebrata</taxon>
        <taxon>Euteleostomi</taxon>
        <taxon>Mammalia</taxon>
        <taxon>Eutheria</taxon>
        <taxon>Laurasiatheria</taxon>
        <taxon>Perissodactyla</taxon>
        <taxon>Equidae</taxon>
        <taxon>Equus</taxon>
    </lineage>
</organism>
<accession>P48653</accession>
<sequence length="346" mass="39061">MNPLIFTTILMTVLLGTMIVMMSSHWLMIWIGFEMNLLAIIPILMKKYNPRTMEASTKYFLTQATASMLLMMAIIINLMHSGQWTITKVFNPTASIIMTSALAMKLGLTPFHFWVPEVTQGISLTSGLILLTWQKLAPMSILYQISPSINLNILLTMAVLSILVGGWGGLNQTQLRKIMAYSSIAHMGWMTAVLVYNPTLTMLNMLIYIMMTLTMFMLFIHSSSTTTLSLSHTWNKMPLTTTLILITLLSMGGLPPLSGFMPKWMIIQELTKNSSIILPTLMAIMALLNLYFYMRLTYSTSLTMFPSTNNMKMKWQFETKRITLLPPLIVMSSLLLPLTPMLSILD</sequence>
<feature type="chain" id="PRO_0000117594" description="NADH-ubiquinone oxidoreductase chain 2">
    <location>
        <begin position="1"/>
        <end position="346"/>
    </location>
</feature>
<feature type="transmembrane region" description="Helical" evidence="3">
    <location>
        <begin position="3"/>
        <end position="23"/>
    </location>
</feature>
<feature type="transmembrane region" description="Helical" evidence="3">
    <location>
        <begin position="25"/>
        <end position="45"/>
    </location>
</feature>
<feature type="transmembrane region" description="Helical" evidence="3">
    <location>
        <begin position="59"/>
        <end position="79"/>
    </location>
</feature>
<feature type="transmembrane region" description="Helical" evidence="3">
    <location>
        <begin position="96"/>
        <end position="116"/>
    </location>
</feature>
<feature type="transmembrane region" description="Helical" evidence="3">
    <location>
        <begin position="122"/>
        <end position="142"/>
    </location>
</feature>
<feature type="transmembrane region" description="Helical" evidence="3">
    <location>
        <begin position="149"/>
        <end position="169"/>
    </location>
</feature>
<feature type="transmembrane region" description="Helical" evidence="3">
    <location>
        <begin position="178"/>
        <end position="198"/>
    </location>
</feature>
<feature type="transmembrane region" description="Helical" evidence="3">
    <location>
        <begin position="200"/>
        <end position="220"/>
    </location>
</feature>
<feature type="transmembrane region" description="Helical" evidence="3">
    <location>
        <begin position="242"/>
        <end position="262"/>
    </location>
</feature>
<feature type="transmembrane region" description="Helical" evidence="3">
    <location>
        <begin position="274"/>
        <end position="294"/>
    </location>
</feature>
<feature type="transmembrane region" description="Helical" evidence="3">
    <location>
        <begin position="322"/>
        <end position="342"/>
    </location>
</feature>